<organism>
    <name type="scientific">Pseudomonas syringae pv. tomato (strain ATCC BAA-871 / DC3000)</name>
    <dbReference type="NCBI Taxonomy" id="223283"/>
    <lineage>
        <taxon>Bacteria</taxon>
        <taxon>Pseudomonadati</taxon>
        <taxon>Pseudomonadota</taxon>
        <taxon>Gammaproteobacteria</taxon>
        <taxon>Pseudomonadales</taxon>
        <taxon>Pseudomonadaceae</taxon>
        <taxon>Pseudomonas</taxon>
    </lineage>
</organism>
<gene>
    <name evidence="1" type="primary">metN2</name>
    <name type="synonym">metN-2</name>
    <name type="ordered locus">PSPTO_5262</name>
</gene>
<keyword id="KW-0029">Amino-acid transport</keyword>
<keyword id="KW-0067">ATP-binding</keyword>
<keyword id="KW-0997">Cell inner membrane</keyword>
<keyword id="KW-1003">Cell membrane</keyword>
<keyword id="KW-0472">Membrane</keyword>
<keyword id="KW-0547">Nucleotide-binding</keyword>
<keyword id="KW-1185">Reference proteome</keyword>
<keyword id="KW-1278">Translocase</keyword>
<keyword id="KW-0813">Transport</keyword>
<name>METN2_PSESM</name>
<protein>
    <recommendedName>
        <fullName evidence="1">Methionine import ATP-binding protein MetN 2</fullName>
        <ecNumber evidence="1">7.4.2.11</ecNumber>
    </recommendedName>
</protein>
<evidence type="ECO:0000255" key="1">
    <source>
        <dbReference type="HAMAP-Rule" id="MF_01719"/>
    </source>
</evidence>
<dbReference type="EC" id="7.4.2.11" evidence="1"/>
<dbReference type="EMBL" id="AE016853">
    <property type="protein sequence ID" value="AAO58688.1"/>
    <property type="molecule type" value="Genomic_DNA"/>
</dbReference>
<dbReference type="RefSeq" id="NP_794993.1">
    <property type="nucleotide sequence ID" value="NC_004578.1"/>
</dbReference>
<dbReference type="RefSeq" id="WP_010203924.1">
    <property type="nucleotide sequence ID" value="NC_004578.1"/>
</dbReference>
<dbReference type="SMR" id="Q87UN4"/>
<dbReference type="STRING" id="223283.PSPTO_5262"/>
<dbReference type="GeneID" id="1186947"/>
<dbReference type="KEGG" id="pst:PSPTO_5262"/>
<dbReference type="PATRIC" id="fig|223283.9.peg.5385"/>
<dbReference type="eggNOG" id="COG1135">
    <property type="taxonomic scope" value="Bacteria"/>
</dbReference>
<dbReference type="HOGENOM" id="CLU_000604_1_3_6"/>
<dbReference type="OrthoDB" id="9802264at2"/>
<dbReference type="PhylomeDB" id="Q87UN4"/>
<dbReference type="Proteomes" id="UP000002515">
    <property type="component" value="Chromosome"/>
</dbReference>
<dbReference type="GO" id="GO:0005886">
    <property type="term" value="C:plasma membrane"/>
    <property type="evidence" value="ECO:0007669"/>
    <property type="project" value="UniProtKB-SubCell"/>
</dbReference>
<dbReference type="GO" id="GO:0033232">
    <property type="term" value="F:ABC-type D-methionine transporter activity"/>
    <property type="evidence" value="ECO:0007669"/>
    <property type="project" value="UniProtKB-EC"/>
</dbReference>
<dbReference type="GO" id="GO:0005524">
    <property type="term" value="F:ATP binding"/>
    <property type="evidence" value="ECO:0007669"/>
    <property type="project" value="UniProtKB-KW"/>
</dbReference>
<dbReference type="GO" id="GO:0016887">
    <property type="term" value="F:ATP hydrolysis activity"/>
    <property type="evidence" value="ECO:0007669"/>
    <property type="project" value="InterPro"/>
</dbReference>
<dbReference type="CDD" id="cd03258">
    <property type="entry name" value="ABC_MetN_methionine_transporter"/>
    <property type="match status" value="1"/>
</dbReference>
<dbReference type="FunFam" id="3.40.50.300:FF:000056">
    <property type="entry name" value="Cell division ATP-binding protein FtsE"/>
    <property type="match status" value="1"/>
</dbReference>
<dbReference type="FunFam" id="3.30.70.260:FF:000038">
    <property type="entry name" value="Methionine import ATP-binding protein MetN"/>
    <property type="match status" value="1"/>
</dbReference>
<dbReference type="Gene3D" id="3.30.70.260">
    <property type="match status" value="1"/>
</dbReference>
<dbReference type="Gene3D" id="3.40.50.300">
    <property type="entry name" value="P-loop containing nucleotide triphosphate hydrolases"/>
    <property type="match status" value="1"/>
</dbReference>
<dbReference type="InterPro" id="IPR003593">
    <property type="entry name" value="AAA+_ATPase"/>
</dbReference>
<dbReference type="InterPro" id="IPR003439">
    <property type="entry name" value="ABC_transporter-like_ATP-bd"/>
</dbReference>
<dbReference type="InterPro" id="IPR017871">
    <property type="entry name" value="ABC_transporter-like_CS"/>
</dbReference>
<dbReference type="InterPro" id="IPR045865">
    <property type="entry name" value="ACT-like_dom_sf"/>
</dbReference>
<dbReference type="InterPro" id="IPR041701">
    <property type="entry name" value="MetN_ABC"/>
</dbReference>
<dbReference type="InterPro" id="IPR050086">
    <property type="entry name" value="MetN_ABC_transporter-like"/>
</dbReference>
<dbReference type="InterPro" id="IPR018449">
    <property type="entry name" value="NIL_domain"/>
</dbReference>
<dbReference type="InterPro" id="IPR027417">
    <property type="entry name" value="P-loop_NTPase"/>
</dbReference>
<dbReference type="PANTHER" id="PTHR43166">
    <property type="entry name" value="AMINO ACID IMPORT ATP-BINDING PROTEIN"/>
    <property type="match status" value="1"/>
</dbReference>
<dbReference type="PANTHER" id="PTHR43166:SF30">
    <property type="entry name" value="METHIONINE IMPORT ATP-BINDING PROTEIN METN"/>
    <property type="match status" value="1"/>
</dbReference>
<dbReference type="Pfam" id="PF00005">
    <property type="entry name" value="ABC_tran"/>
    <property type="match status" value="1"/>
</dbReference>
<dbReference type="Pfam" id="PF09383">
    <property type="entry name" value="NIL"/>
    <property type="match status" value="1"/>
</dbReference>
<dbReference type="SMART" id="SM00382">
    <property type="entry name" value="AAA"/>
    <property type="match status" value="1"/>
</dbReference>
<dbReference type="SMART" id="SM00930">
    <property type="entry name" value="NIL"/>
    <property type="match status" value="1"/>
</dbReference>
<dbReference type="SUPFAM" id="SSF55021">
    <property type="entry name" value="ACT-like"/>
    <property type="match status" value="1"/>
</dbReference>
<dbReference type="SUPFAM" id="SSF52540">
    <property type="entry name" value="P-loop containing nucleoside triphosphate hydrolases"/>
    <property type="match status" value="1"/>
</dbReference>
<dbReference type="PROSITE" id="PS00211">
    <property type="entry name" value="ABC_TRANSPORTER_1"/>
    <property type="match status" value="1"/>
</dbReference>
<dbReference type="PROSITE" id="PS50893">
    <property type="entry name" value="ABC_TRANSPORTER_2"/>
    <property type="match status" value="1"/>
</dbReference>
<dbReference type="PROSITE" id="PS51264">
    <property type="entry name" value="METN"/>
    <property type="match status" value="1"/>
</dbReference>
<feature type="chain" id="PRO_0000270359" description="Methionine import ATP-binding protein MetN 2">
    <location>
        <begin position="1"/>
        <end position="335"/>
    </location>
</feature>
<feature type="domain" description="ABC transporter" evidence="1">
    <location>
        <begin position="2"/>
        <end position="242"/>
    </location>
</feature>
<feature type="binding site" evidence="1">
    <location>
        <begin position="38"/>
        <end position="45"/>
    </location>
    <ligand>
        <name>ATP</name>
        <dbReference type="ChEBI" id="CHEBI:30616"/>
    </ligand>
</feature>
<proteinExistence type="inferred from homology"/>
<sequence>MIEFHNVHKTYRVAGKEIPALHPTNLRVDDGQVFGIIGHSGAGKSTLLRLINRLETPSGGQIVVDGEDVTALDANGLRRFRQQVGMIFQHFNLLASRTVADNVAMPLTLAGDMPRKQIDQRVAELLERVGLSDHAKKYPAQLSGGQKQRVGIARALATKPKILLCDEATSALDPQTTASVLQLLAEINRELKLTIVLITHEMDVIRRVCDQVAVMDAGVIVEQGKVADVFLHPQHSTTKRFVQEDDQVDENEQRDDFAHVQGRIVRLTFQGDATYAPLLGTVARETGVDYSILAGRIDRIKDTPYGQLTLAITGGDMDAAFARFTAADVHMEVLR</sequence>
<reference key="1">
    <citation type="journal article" date="2003" name="Proc. Natl. Acad. Sci. U.S.A.">
        <title>The complete genome sequence of the Arabidopsis and tomato pathogen Pseudomonas syringae pv. tomato DC3000.</title>
        <authorList>
            <person name="Buell C.R."/>
            <person name="Joardar V."/>
            <person name="Lindeberg M."/>
            <person name="Selengut J."/>
            <person name="Paulsen I.T."/>
            <person name="Gwinn M.L."/>
            <person name="Dodson R.J."/>
            <person name="DeBoy R.T."/>
            <person name="Durkin A.S."/>
            <person name="Kolonay J.F."/>
            <person name="Madupu R."/>
            <person name="Daugherty S.C."/>
            <person name="Brinkac L.M."/>
            <person name="Beanan M.J."/>
            <person name="Haft D.H."/>
            <person name="Nelson W.C."/>
            <person name="Davidsen T.M."/>
            <person name="Zafar N."/>
            <person name="Zhou L."/>
            <person name="Liu J."/>
            <person name="Yuan Q."/>
            <person name="Khouri H.M."/>
            <person name="Fedorova N.B."/>
            <person name="Tran B."/>
            <person name="Russell D."/>
            <person name="Berry K.J."/>
            <person name="Utterback T.R."/>
            <person name="Van Aken S.E."/>
            <person name="Feldblyum T.V."/>
            <person name="D'Ascenzo M."/>
            <person name="Deng W.-L."/>
            <person name="Ramos A.R."/>
            <person name="Alfano J.R."/>
            <person name="Cartinhour S."/>
            <person name="Chatterjee A.K."/>
            <person name="Delaney T.P."/>
            <person name="Lazarowitz S.G."/>
            <person name="Martin G.B."/>
            <person name="Schneider D.J."/>
            <person name="Tang X."/>
            <person name="Bender C.L."/>
            <person name="White O."/>
            <person name="Fraser C.M."/>
            <person name="Collmer A."/>
        </authorList>
    </citation>
    <scope>NUCLEOTIDE SEQUENCE [LARGE SCALE GENOMIC DNA]</scope>
    <source>
        <strain>ATCC BAA-871 / DC3000</strain>
    </source>
</reference>
<comment type="function">
    <text evidence="1">Part of the ABC transporter complex MetNIQ involved in methionine import. Responsible for energy coupling to the transport system.</text>
</comment>
<comment type="catalytic activity">
    <reaction evidence="1">
        <text>L-methionine(out) + ATP + H2O = L-methionine(in) + ADP + phosphate + H(+)</text>
        <dbReference type="Rhea" id="RHEA:29779"/>
        <dbReference type="ChEBI" id="CHEBI:15377"/>
        <dbReference type="ChEBI" id="CHEBI:15378"/>
        <dbReference type="ChEBI" id="CHEBI:30616"/>
        <dbReference type="ChEBI" id="CHEBI:43474"/>
        <dbReference type="ChEBI" id="CHEBI:57844"/>
        <dbReference type="ChEBI" id="CHEBI:456216"/>
        <dbReference type="EC" id="7.4.2.11"/>
    </reaction>
</comment>
<comment type="catalytic activity">
    <reaction evidence="1">
        <text>D-methionine(out) + ATP + H2O = D-methionine(in) + ADP + phosphate + H(+)</text>
        <dbReference type="Rhea" id="RHEA:29767"/>
        <dbReference type="ChEBI" id="CHEBI:15377"/>
        <dbReference type="ChEBI" id="CHEBI:15378"/>
        <dbReference type="ChEBI" id="CHEBI:30616"/>
        <dbReference type="ChEBI" id="CHEBI:43474"/>
        <dbReference type="ChEBI" id="CHEBI:57932"/>
        <dbReference type="ChEBI" id="CHEBI:456216"/>
        <dbReference type="EC" id="7.4.2.11"/>
    </reaction>
</comment>
<comment type="subunit">
    <text evidence="1">The complex is composed of two ATP-binding proteins (MetN), two transmembrane proteins (MetI) and a solute-binding protein (MetQ).</text>
</comment>
<comment type="subcellular location">
    <subcellularLocation>
        <location evidence="1">Cell inner membrane</location>
        <topology evidence="1">Peripheral membrane protein</topology>
    </subcellularLocation>
</comment>
<comment type="similarity">
    <text evidence="1">Belongs to the ABC transporter superfamily. Methionine importer (TC 3.A.1.24) family.</text>
</comment>
<accession>Q87UN4</accession>